<name>Y103_METJA</name>
<sequence>MVCLDLSQYRMITDVKNKDNTLILEINKIYEIEVEIPYEEVEIDGSIIKINAHPKRAENIKVGILNLISYSIANNLKSKITKRKTIYINEPIPLIGHTAFGLIERGRNIIQVRGHCGCNLNCIFCSVDEGEFSKTRKNDYYVDLEYLIENYKKIVDFKENKFIEAHLDGQGEPSLYYPLVDLVQELAEINKKGNGIVSMQTNGTVLNYKLIDELEEAGLHRINLSINALDEKMAKMLSGRRDYNIKKILDIAEYIKNSKIHLLIAPLLLPNINDEEFKRVIEYAVDLEQKNPQNIINPLTGKKDPILGCQLCRVYQLGRRPKKMKVWDFEKFYYLLGKYELEYKKKGIEVKLITSPKDFGTHKRKRLPYPFKVGEVTKVKVVLDGRVKGEVLGVAKDRVIQIINCNNEQNLIGKTVKVRILRNKDNIIVAELV</sequence>
<comment type="cofactor">
    <cofactor evidence="1">
        <name>[4Fe-4S] cluster</name>
        <dbReference type="ChEBI" id="CHEBI:49883"/>
    </cofactor>
    <text evidence="1">Binds 1 [4Fe-4S] cluster. The cluster is coordinated with 3 cysteines and an exchangeable S-adenosyl-L-methionine.</text>
</comment>
<comment type="similarity">
    <text evidence="4">Belongs to the radical SAM superfamily.</text>
</comment>
<keyword id="KW-0004">4Fe-4S</keyword>
<keyword id="KW-0408">Iron</keyword>
<keyword id="KW-0411">Iron-sulfur</keyword>
<keyword id="KW-0479">Metal-binding</keyword>
<keyword id="KW-1185">Reference proteome</keyword>
<keyword id="KW-0949">S-adenosyl-L-methionine</keyword>
<evidence type="ECO:0000250" key="1"/>
<evidence type="ECO:0000255" key="2">
    <source>
        <dbReference type="PROSITE-ProRule" id="PRU00208"/>
    </source>
</evidence>
<evidence type="ECO:0000255" key="3">
    <source>
        <dbReference type="PROSITE-ProRule" id="PRU01266"/>
    </source>
</evidence>
<evidence type="ECO:0000305" key="4"/>
<feature type="chain" id="PRO_0000171931" description="Uncharacterized protein MJ0103">
    <location>
        <begin position="1"/>
        <end position="433"/>
    </location>
</feature>
<feature type="domain" description="Radical SAM core" evidence="3">
    <location>
        <begin position="104"/>
        <end position="349"/>
    </location>
</feature>
<feature type="domain" description="TRAM" evidence="2">
    <location>
        <begin position="370"/>
        <end position="433"/>
    </location>
</feature>
<feature type="binding site" evidence="1">
    <location>
        <position position="118"/>
    </location>
    <ligand>
        <name>[4Fe-4S] cluster</name>
        <dbReference type="ChEBI" id="CHEBI:49883"/>
        <note>4Fe-4S-S-AdoMet</note>
    </ligand>
</feature>
<feature type="binding site" evidence="1">
    <location>
        <position position="122"/>
    </location>
    <ligand>
        <name>[4Fe-4S] cluster</name>
        <dbReference type="ChEBI" id="CHEBI:49883"/>
        <note>4Fe-4S-S-AdoMet</note>
    </ligand>
</feature>
<feature type="binding site" evidence="1">
    <location>
        <position position="125"/>
    </location>
    <ligand>
        <name>[4Fe-4S] cluster</name>
        <dbReference type="ChEBI" id="CHEBI:49883"/>
        <note>4Fe-4S-S-AdoMet</note>
    </ligand>
</feature>
<feature type="binding site" evidence="1">
    <location>
        <begin position="171"/>
        <end position="172"/>
    </location>
    <ligand>
        <name>S-adenosyl-L-methionine</name>
        <dbReference type="ChEBI" id="CHEBI:59789"/>
    </ligand>
</feature>
<feature type="binding site" evidence="1">
    <location>
        <begin position="236"/>
        <end position="238"/>
    </location>
    <ligand>
        <name>S-adenosyl-L-methionine</name>
        <dbReference type="ChEBI" id="CHEBI:59789"/>
    </ligand>
</feature>
<reference key="1">
    <citation type="journal article" date="1996" name="Science">
        <title>Complete genome sequence of the methanogenic archaeon, Methanococcus jannaschii.</title>
        <authorList>
            <person name="Bult C.J."/>
            <person name="White O."/>
            <person name="Olsen G.J."/>
            <person name="Zhou L."/>
            <person name="Fleischmann R.D."/>
            <person name="Sutton G.G."/>
            <person name="Blake J.A."/>
            <person name="FitzGerald L.M."/>
            <person name="Clayton R.A."/>
            <person name="Gocayne J.D."/>
            <person name="Kerlavage A.R."/>
            <person name="Dougherty B.A."/>
            <person name="Tomb J.-F."/>
            <person name="Adams M.D."/>
            <person name="Reich C.I."/>
            <person name="Overbeek R."/>
            <person name="Kirkness E.F."/>
            <person name="Weinstock K.G."/>
            <person name="Merrick J.M."/>
            <person name="Glodek A."/>
            <person name="Scott J.L."/>
            <person name="Geoghagen N.S.M."/>
            <person name="Weidman J.F."/>
            <person name="Fuhrmann J.L."/>
            <person name="Nguyen D."/>
            <person name="Utterback T.R."/>
            <person name="Kelley J.M."/>
            <person name="Peterson J.D."/>
            <person name="Sadow P.W."/>
            <person name="Hanna M.C."/>
            <person name="Cotton M.D."/>
            <person name="Roberts K.M."/>
            <person name="Hurst M.A."/>
            <person name="Kaine B.P."/>
            <person name="Borodovsky M."/>
            <person name="Klenk H.-P."/>
            <person name="Fraser C.M."/>
            <person name="Smith H.O."/>
            <person name="Woese C.R."/>
            <person name="Venter J.C."/>
        </authorList>
    </citation>
    <scope>NUCLEOTIDE SEQUENCE [LARGE SCALE GENOMIC DNA]</scope>
    <source>
        <strain>ATCC 43067 / DSM 2661 / JAL-1 / JCM 10045 / NBRC 100440</strain>
    </source>
</reference>
<proteinExistence type="inferred from homology"/>
<accession>Q57567</accession>
<protein>
    <recommendedName>
        <fullName>Uncharacterized protein MJ0103</fullName>
    </recommendedName>
</protein>
<organism>
    <name type="scientific">Methanocaldococcus jannaschii (strain ATCC 43067 / DSM 2661 / JAL-1 / JCM 10045 / NBRC 100440)</name>
    <name type="common">Methanococcus jannaschii</name>
    <dbReference type="NCBI Taxonomy" id="243232"/>
    <lineage>
        <taxon>Archaea</taxon>
        <taxon>Methanobacteriati</taxon>
        <taxon>Methanobacteriota</taxon>
        <taxon>Methanomada group</taxon>
        <taxon>Methanococci</taxon>
        <taxon>Methanococcales</taxon>
        <taxon>Methanocaldococcaceae</taxon>
        <taxon>Methanocaldococcus</taxon>
    </lineage>
</organism>
<gene>
    <name type="ordered locus">MJ0103</name>
</gene>
<dbReference type="EMBL" id="L77117">
    <property type="protein sequence ID" value="AAB98083.1"/>
    <property type="molecule type" value="Genomic_DNA"/>
</dbReference>
<dbReference type="PIR" id="G64312">
    <property type="entry name" value="G64312"/>
</dbReference>
<dbReference type="RefSeq" id="WP_010869595.1">
    <property type="nucleotide sequence ID" value="NC_000909.1"/>
</dbReference>
<dbReference type="SMR" id="Q57567"/>
<dbReference type="STRING" id="243232.MJ_0103"/>
<dbReference type="PaxDb" id="243232-MJ_0103"/>
<dbReference type="EnsemblBacteria" id="AAB98083">
    <property type="protein sequence ID" value="AAB98083"/>
    <property type="gene ID" value="MJ_0103"/>
</dbReference>
<dbReference type="GeneID" id="1450944"/>
<dbReference type="KEGG" id="mja:MJ_0103"/>
<dbReference type="eggNOG" id="arCOG00951">
    <property type="taxonomic scope" value="Archaea"/>
</dbReference>
<dbReference type="HOGENOM" id="CLU_048071_0_0_2"/>
<dbReference type="InParanoid" id="Q57567"/>
<dbReference type="OrthoDB" id="371936at2157"/>
<dbReference type="PhylomeDB" id="Q57567"/>
<dbReference type="Proteomes" id="UP000000805">
    <property type="component" value="Chromosome"/>
</dbReference>
<dbReference type="GO" id="GO:0051539">
    <property type="term" value="F:4 iron, 4 sulfur cluster binding"/>
    <property type="evidence" value="ECO:0007669"/>
    <property type="project" value="UniProtKB-KW"/>
</dbReference>
<dbReference type="GO" id="GO:0003824">
    <property type="term" value="F:catalytic activity"/>
    <property type="evidence" value="ECO:0007669"/>
    <property type="project" value="InterPro"/>
</dbReference>
<dbReference type="GO" id="GO:0046872">
    <property type="term" value="F:metal ion binding"/>
    <property type="evidence" value="ECO:0007669"/>
    <property type="project" value="UniProtKB-KW"/>
</dbReference>
<dbReference type="CDD" id="cd01335">
    <property type="entry name" value="Radical_SAM"/>
    <property type="match status" value="1"/>
</dbReference>
<dbReference type="Gene3D" id="3.20.20.70">
    <property type="entry name" value="Aldolase class I"/>
    <property type="match status" value="1"/>
</dbReference>
<dbReference type="InterPro" id="IPR013785">
    <property type="entry name" value="Aldolase_TIM"/>
</dbReference>
<dbReference type="InterPro" id="IPR006638">
    <property type="entry name" value="Elp3/MiaA/NifB-like_rSAM"/>
</dbReference>
<dbReference type="InterPro" id="IPR040088">
    <property type="entry name" value="MJ0103-like"/>
</dbReference>
<dbReference type="InterPro" id="IPR007197">
    <property type="entry name" value="rSAM"/>
</dbReference>
<dbReference type="InterPro" id="IPR002792">
    <property type="entry name" value="TRAM_dom"/>
</dbReference>
<dbReference type="PANTHER" id="PTHR43787:SF3">
    <property type="entry name" value="ARYLSULFATASE REGULATORY PROTEIN"/>
    <property type="match status" value="1"/>
</dbReference>
<dbReference type="PANTHER" id="PTHR43787">
    <property type="entry name" value="FEMO COFACTOR BIOSYNTHESIS PROTEIN NIFB-RELATED"/>
    <property type="match status" value="1"/>
</dbReference>
<dbReference type="Pfam" id="PF04055">
    <property type="entry name" value="Radical_SAM"/>
    <property type="match status" value="1"/>
</dbReference>
<dbReference type="SFLD" id="SFLDS00029">
    <property type="entry name" value="Radical_SAM"/>
    <property type="match status" value="1"/>
</dbReference>
<dbReference type="SFLD" id="SFLDG01067">
    <property type="entry name" value="SPASM/twitch_domain_containing"/>
    <property type="match status" value="1"/>
</dbReference>
<dbReference type="SFLD" id="SFLDG01110">
    <property type="entry name" value="Uncharacterised_Radical_SAM_Su"/>
    <property type="match status" value="1"/>
</dbReference>
<dbReference type="SMART" id="SM00729">
    <property type="entry name" value="Elp3"/>
    <property type="match status" value="1"/>
</dbReference>
<dbReference type="SUPFAM" id="SSF102114">
    <property type="entry name" value="Radical SAM enzymes"/>
    <property type="match status" value="1"/>
</dbReference>
<dbReference type="PROSITE" id="PS51918">
    <property type="entry name" value="RADICAL_SAM"/>
    <property type="match status" value="1"/>
</dbReference>
<dbReference type="PROSITE" id="PS50926">
    <property type="entry name" value="TRAM"/>
    <property type="match status" value="1"/>
</dbReference>